<feature type="transit peptide" description="Mitochondrion" evidence="2">
    <location>
        <begin position="1"/>
        <end status="unknown"/>
    </location>
</feature>
<feature type="chain" id="PRO_0000407942" description="Required for respiratory growth protein 9, mitochondrial">
    <location>
        <begin status="unknown"/>
        <end position="270"/>
    </location>
</feature>
<feature type="region of interest" description="Disordered" evidence="3">
    <location>
        <begin position="59"/>
        <end position="152"/>
    </location>
</feature>
<feature type="region of interest" description="Disordered" evidence="3">
    <location>
        <begin position="248"/>
        <end position="270"/>
    </location>
</feature>
<feature type="compositionally biased region" description="Low complexity" evidence="3">
    <location>
        <begin position="59"/>
        <end position="79"/>
    </location>
</feature>
<feature type="compositionally biased region" description="Polar residues" evidence="3">
    <location>
        <begin position="117"/>
        <end position="128"/>
    </location>
</feature>
<dbReference type="EMBL" id="CH476595">
    <property type="protein sequence ID" value="EAU37926.1"/>
    <property type="molecule type" value="Genomic_DNA"/>
</dbReference>
<dbReference type="RefSeq" id="XP_001208534.1">
    <property type="nucleotide sequence ID" value="XM_001208534.1"/>
</dbReference>
<dbReference type="SMR" id="Q0CYR5"/>
<dbReference type="STRING" id="341663.Q0CYR5"/>
<dbReference type="EnsemblFungi" id="EAU37926">
    <property type="protein sequence ID" value="EAU37926"/>
    <property type="gene ID" value="ATEG_01169"/>
</dbReference>
<dbReference type="GeneID" id="4315792"/>
<dbReference type="VEuPathDB" id="FungiDB:ATEG_01169"/>
<dbReference type="eggNOG" id="ENOG502S7IA">
    <property type="taxonomic scope" value="Eukaryota"/>
</dbReference>
<dbReference type="HOGENOM" id="CLU_047598_3_0_1"/>
<dbReference type="OMA" id="AFCAHSA"/>
<dbReference type="OrthoDB" id="5578174at2759"/>
<dbReference type="Proteomes" id="UP000007963">
    <property type="component" value="Unassembled WGS sequence"/>
</dbReference>
<dbReference type="GO" id="GO:0005739">
    <property type="term" value="C:mitochondrion"/>
    <property type="evidence" value="ECO:0007669"/>
    <property type="project" value="UniProtKB-SubCell"/>
</dbReference>
<dbReference type="GO" id="GO:0005634">
    <property type="term" value="C:nucleus"/>
    <property type="evidence" value="ECO:0007669"/>
    <property type="project" value="TreeGrafter"/>
</dbReference>
<dbReference type="InterPro" id="IPR010487">
    <property type="entry name" value="NGRN/Rrg9"/>
</dbReference>
<dbReference type="PANTHER" id="PTHR13475">
    <property type="entry name" value="NEUGRIN"/>
    <property type="match status" value="1"/>
</dbReference>
<dbReference type="PANTHER" id="PTHR13475:SF3">
    <property type="entry name" value="NEUGRIN"/>
    <property type="match status" value="1"/>
</dbReference>
<dbReference type="Pfam" id="PF06413">
    <property type="entry name" value="Neugrin"/>
    <property type="match status" value="1"/>
</dbReference>
<evidence type="ECO:0000250" key="1"/>
<evidence type="ECO:0000255" key="2"/>
<evidence type="ECO:0000256" key="3">
    <source>
        <dbReference type="SAM" id="MobiDB-lite"/>
    </source>
</evidence>
<evidence type="ECO:0000305" key="4"/>
<reference key="1">
    <citation type="submission" date="2005-09" db="EMBL/GenBank/DDBJ databases">
        <title>Annotation of the Aspergillus terreus NIH2624 genome.</title>
        <authorList>
            <person name="Birren B.W."/>
            <person name="Lander E.S."/>
            <person name="Galagan J.E."/>
            <person name="Nusbaum C."/>
            <person name="Devon K."/>
            <person name="Henn M."/>
            <person name="Ma L.-J."/>
            <person name="Jaffe D.B."/>
            <person name="Butler J."/>
            <person name="Alvarez P."/>
            <person name="Gnerre S."/>
            <person name="Grabherr M."/>
            <person name="Kleber M."/>
            <person name="Mauceli E.W."/>
            <person name="Brockman W."/>
            <person name="Rounsley S."/>
            <person name="Young S.K."/>
            <person name="LaButti K."/>
            <person name="Pushparaj V."/>
            <person name="DeCaprio D."/>
            <person name="Crawford M."/>
            <person name="Koehrsen M."/>
            <person name="Engels R."/>
            <person name="Montgomery P."/>
            <person name="Pearson M."/>
            <person name="Howarth C."/>
            <person name="Larson L."/>
            <person name="Luoma S."/>
            <person name="White J."/>
            <person name="Alvarado L."/>
            <person name="Kodira C.D."/>
            <person name="Zeng Q."/>
            <person name="Oleary S."/>
            <person name="Yandava C."/>
            <person name="Denning D.W."/>
            <person name="Nierman W.C."/>
            <person name="Milne T."/>
            <person name="Madden K."/>
        </authorList>
    </citation>
    <scope>NUCLEOTIDE SEQUENCE [LARGE SCALE GENOMIC DNA]</scope>
    <source>
        <strain>NIH 2624 / FGSC A1156</strain>
    </source>
</reference>
<keyword id="KW-0496">Mitochondrion</keyword>
<keyword id="KW-1185">Reference proteome</keyword>
<keyword id="KW-0809">Transit peptide</keyword>
<sequence length="270" mass="30437">MVAFCAHSATLGLPTVLENVFRAQFASELPSFARHRTAIISRRPAYSRQFRSLSHNGFSLSQSISSSSSQSPATSQSQSKGNAHQSEVSIEDLTDNVTTSNSTSTPKDTPHTPPKASKTQKNSTGATEKNSRADNGLKATGPKPKRKKEGWQIQKDALKQKFREGWNPPKKLSPDALEGIRHLNAVAPDRFTTPVLAEQFRVSPEAIRRILKSKWRASEEELEDRRKRWERRHDRIWGHLSELGLRPKTKRTEPFADTNVLYDDRRKGSR</sequence>
<protein>
    <recommendedName>
        <fullName>Required for respiratory growth protein 9, mitochondrial</fullName>
    </recommendedName>
</protein>
<accession>Q0CYR5</accession>
<organism>
    <name type="scientific">Aspergillus terreus (strain NIH 2624 / FGSC A1156)</name>
    <dbReference type="NCBI Taxonomy" id="341663"/>
    <lineage>
        <taxon>Eukaryota</taxon>
        <taxon>Fungi</taxon>
        <taxon>Dikarya</taxon>
        <taxon>Ascomycota</taxon>
        <taxon>Pezizomycotina</taxon>
        <taxon>Eurotiomycetes</taxon>
        <taxon>Eurotiomycetidae</taxon>
        <taxon>Eurotiales</taxon>
        <taxon>Aspergillaceae</taxon>
        <taxon>Aspergillus</taxon>
        <taxon>Aspergillus subgen. Circumdati</taxon>
    </lineage>
</organism>
<gene>
    <name type="primary">rrg9</name>
    <name type="ORF">ATEG_01169</name>
</gene>
<proteinExistence type="inferred from homology"/>
<name>RRG9_ASPTN</name>
<comment type="function">
    <text evidence="1">Required for respiratory activity and maintenance and expression of the mitochondrial genome.</text>
</comment>
<comment type="subcellular location">
    <subcellularLocation>
        <location evidence="1">Mitochondrion</location>
    </subcellularLocation>
</comment>
<comment type="similarity">
    <text evidence="4">Belongs to the RRG9 family.</text>
</comment>